<protein>
    <recommendedName>
        <fullName evidence="1">4-hydroxy-2-oxovalerate aldolase 2</fullName>
        <shortName evidence="1">HOA 2</shortName>
        <ecNumber evidence="1">4.1.3.39</ecNumber>
    </recommendedName>
    <alternativeName>
        <fullName evidence="1">4-hydroxy-2-keto-pentanoic acid aldolase 2</fullName>
    </alternativeName>
    <alternativeName>
        <fullName evidence="1">4-hydroxy-2-oxopentanoate aldolase 2</fullName>
    </alternativeName>
</protein>
<reference key="1">
    <citation type="submission" date="2007-04" db="EMBL/GenBank/DDBJ databases">
        <title>Complete sequence of plasmid pNL1 of Novosphingobium aromaticivorans DSM 12444.</title>
        <authorList>
            <consortium name="US DOE Joint Genome Institute"/>
            <person name="Copeland A."/>
            <person name="Lucas S."/>
            <person name="Lapidus A."/>
            <person name="Barry K."/>
            <person name="Detter J.C."/>
            <person name="Glavina del Rio T."/>
            <person name="Hammon N."/>
            <person name="Israni S."/>
            <person name="Dalin E."/>
            <person name="Tice H."/>
            <person name="Pitluck S."/>
            <person name="Chertkov O."/>
            <person name="Han C."/>
            <person name="Thomson S."/>
            <person name="Schmutz J."/>
            <person name="Larimer F."/>
            <person name="Land M."/>
            <person name="Kyrpides N."/>
            <person name="Ivanova N."/>
            <person name="Fredrickson J."/>
            <person name="Romine M.F."/>
            <person name="Richardson P."/>
        </authorList>
    </citation>
    <scope>NUCLEOTIDE SEQUENCE [LARGE SCALE GENOMIC DNA]</scope>
    <source>
        <strain>ATCC 700278 / DSM 12444 / CCUG 56034 / CIP 105152 / NBRC 16084 / F199</strain>
    </source>
</reference>
<feature type="chain" id="PRO_0000387874" description="4-hydroxy-2-oxovalerate aldolase 2">
    <location>
        <begin position="1"/>
        <end position="343"/>
    </location>
</feature>
<feature type="domain" description="Pyruvate carboxyltransferase" evidence="1">
    <location>
        <begin position="10"/>
        <end position="262"/>
    </location>
</feature>
<feature type="active site" description="Proton acceptor" evidence="1">
    <location>
        <position position="22"/>
    </location>
</feature>
<feature type="binding site" evidence="1">
    <location>
        <begin position="18"/>
        <end position="19"/>
    </location>
    <ligand>
        <name>substrate</name>
    </ligand>
</feature>
<feature type="binding site" evidence="1">
    <location>
        <position position="19"/>
    </location>
    <ligand>
        <name>Mn(2+)</name>
        <dbReference type="ChEBI" id="CHEBI:29035"/>
    </ligand>
</feature>
<feature type="binding site" evidence="1">
    <location>
        <position position="172"/>
    </location>
    <ligand>
        <name>substrate</name>
    </ligand>
</feature>
<feature type="binding site" evidence="1">
    <location>
        <position position="201"/>
    </location>
    <ligand>
        <name>Mn(2+)</name>
        <dbReference type="ChEBI" id="CHEBI:29035"/>
    </ligand>
</feature>
<feature type="binding site" evidence="1">
    <location>
        <position position="201"/>
    </location>
    <ligand>
        <name>substrate</name>
    </ligand>
</feature>
<feature type="binding site" evidence="1">
    <location>
        <position position="203"/>
    </location>
    <ligand>
        <name>Mn(2+)</name>
        <dbReference type="ChEBI" id="CHEBI:29035"/>
    </ligand>
</feature>
<feature type="binding site" evidence="1">
    <location>
        <position position="292"/>
    </location>
    <ligand>
        <name>substrate</name>
    </ligand>
</feature>
<feature type="site" description="Transition state stabilizer" evidence="1">
    <location>
        <position position="18"/>
    </location>
</feature>
<sequence>MTFDPTSDRLYIQDVTLRDGMHAILHMYGTDSVRTIAKALDEAGVDAIEVSHGDGLNGSTFNYGFGAHTDWDWIEAAADVIKNAVLTTLLVPGIGTAEELKRAYSMGVRSVRVATHCTEADVGKQHIGIARDLGMDVSGFLMMSHMIEPEALAQQALLMESYGAHCVYVTDSGGALDMDGVIARLQAYDRVLKPETQRGIHAHHNLSLGVANSIVAAQAGAVRIDASLAGMGAGAGNAPLEVFIAAANRKGWKHGCDVMALMDAADDIIRPLQDRPVRVDRETLSLGYAGVYSSFLRHAEKAAEQYGIDTREILVELGNRRMVGGQEDMIIDVALDLIKAKAN</sequence>
<name>HOA2_NOVAD</name>
<keyword id="KW-0058">Aromatic hydrocarbons catabolism</keyword>
<keyword id="KW-0456">Lyase</keyword>
<keyword id="KW-0464">Manganese</keyword>
<keyword id="KW-0479">Metal-binding</keyword>
<keyword id="KW-0614">Plasmid</keyword>
<keyword id="KW-1185">Reference proteome</keyword>
<dbReference type="EC" id="4.1.3.39" evidence="1"/>
<dbReference type="EMBL" id="CP000676">
    <property type="protein sequence ID" value="ABP64097.1"/>
    <property type="molecule type" value="Genomic_DNA"/>
</dbReference>
<dbReference type="SMR" id="A4XDT6"/>
<dbReference type="KEGG" id="nar:Saro_3852"/>
<dbReference type="HOGENOM" id="CLU_049173_0_0_5"/>
<dbReference type="Proteomes" id="UP000009134">
    <property type="component" value="Plasmid pNL1"/>
</dbReference>
<dbReference type="GO" id="GO:0003852">
    <property type="term" value="F:2-isopropylmalate synthase activity"/>
    <property type="evidence" value="ECO:0007669"/>
    <property type="project" value="TreeGrafter"/>
</dbReference>
<dbReference type="GO" id="GO:0008701">
    <property type="term" value="F:4-hydroxy-2-oxovalerate aldolase activity"/>
    <property type="evidence" value="ECO:0007669"/>
    <property type="project" value="UniProtKB-UniRule"/>
</dbReference>
<dbReference type="GO" id="GO:0030145">
    <property type="term" value="F:manganese ion binding"/>
    <property type="evidence" value="ECO:0007669"/>
    <property type="project" value="UniProtKB-UniRule"/>
</dbReference>
<dbReference type="GO" id="GO:0009056">
    <property type="term" value="P:catabolic process"/>
    <property type="evidence" value="ECO:0007669"/>
    <property type="project" value="UniProtKB-KW"/>
</dbReference>
<dbReference type="GO" id="GO:0009098">
    <property type="term" value="P:L-leucine biosynthetic process"/>
    <property type="evidence" value="ECO:0007669"/>
    <property type="project" value="TreeGrafter"/>
</dbReference>
<dbReference type="CDD" id="cd07943">
    <property type="entry name" value="DRE_TIM_HOA"/>
    <property type="match status" value="1"/>
</dbReference>
<dbReference type="FunFam" id="1.10.8.60:FF:000042">
    <property type="entry name" value="4-hydroxy-2-oxovalerate aldolase"/>
    <property type="match status" value="1"/>
</dbReference>
<dbReference type="Gene3D" id="1.10.8.60">
    <property type="match status" value="1"/>
</dbReference>
<dbReference type="Gene3D" id="3.20.20.70">
    <property type="entry name" value="Aldolase class I"/>
    <property type="match status" value="1"/>
</dbReference>
<dbReference type="HAMAP" id="MF_01656">
    <property type="entry name" value="HOA"/>
    <property type="match status" value="1"/>
</dbReference>
<dbReference type="InterPro" id="IPR050073">
    <property type="entry name" value="2-IPM_HCS-like"/>
</dbReference>
<dbReference type="InterPro" id="IPR017629">
    <property type="entry name" value="4OH_2_O-val_aldolase"/>
</dbReference>
<dbReference type="InterPro" id="IPR013785">
    <property type="entry name" value="Aldolase_TIM"/>
</dbReference>
<dbReference type="InterPro" id="IPR012425">
    <property type="entry name" value="DmpG_comm"/>
</dbReference>
<dbReference type="InterPro" id="IPR035685">
    <property type="entry name" value="DRE_TIM_HOA"/>
</dbReference>
<dbReference type="InterPro" id="IPR000891">
    <property type="entry name" value="PYR_CT"/>
</dbReference>
<dbReference type="NCBIfam" id="TIGR03217">
    <property type="entry name" value="4OH_2_O_val_ald"/>
    <property type="match status" value="1"/>
</dbReference>
<dbReference type="NCBIfam" id="NF006049">
    <property type="entry name" value="PRK08195.1"/>
    <property type="match status" value="1"/>
</dbReference>
<dbReference type="PANTHER" id="PTHR10277:SF9">
    <property type="entry name" value="2-ISOPROPYLMALATE SYNTHASE 1, CHLOROPLASTIC-RELATED"/>
    <property type="match status" value="1"/>
</dbReference>
<dbReference type="PANTHER" id="PTHR10277">
    <property type="entry name" value="HOMOCITRATE SYNTHASE-RELATED"/>
    <property type="match status" value="1"/>
</dbReference>
<dbReference type="Pfam" id="PF07836">
    <property type="entry name" value="DmpG_comm"/>
    <property type="match status" value="1"/>
</dbReference>
<dbReference type="Pfam" id="PF00682">
    <property type="entry name" value="HMGL-like"/>
    <property type="match status" value="1"/>
</dbReference>
<dbReference type="SUPFAM" id="SSF51569">
    <property type="entry name" value="Aldolase"/>
    <property type="match status" value="1"/>
</dbReference>
<dbReference type="SUPFAM" id="SSF89000">
    <property type="entry name" value="post-HMGL domain-like"/>
    <property type="match status" value="1"/>
</dbReference>
<dbReference type="PROSITE" id="PS50991">
    <property type="entry name" value="PYR_CT"/>
    <property type="match status" value="1"/>
</dbReference>
<geneLocation type="plasmid">
    <name>pNL1</name>
</geneLocation>
<organism>
    <name type="scientific">Novosphingobium aromaticivorans (strain ATCC 700278 / DSM 12444 / CCUG 56034 / CIP 105152 / NBRC 16084 / F199)</name>
    <dbReference type="NCBI Taxonomy" id="279238"/>
    <lineage>
        <taxon>Bacteria</taxon>
        <taxon>Pseudomonadati</taxon>
        <taxon>Pseudomonadota</taxon>
        <taxon>Alphaproteobacteria</taxon>
        <taxon>Sphingomonadales</taxon>
        <taxon>Sphingomonadaceae</taxon>
        <taxon>Novosphingobium</taxon>
    </lineage>
</organism>
<comment type="catalytic activity">
    <reaction evidence="1">
        <text>(S)-4-hydroxy-2-oxopentanoate = acetaldehyde + pyruvate</text>
        <dbReference type="Rhea" id="RHEA:22624"/>
        <dbReference type="ChEBI" id="CHEBI:15343"/>
        <dbReference type="ChEBI" id="CHEBI:15361"/>
        <dbReference type="ChEBI" id="CHEBI:73143"/>
        <dbReference type="EC" id="4.1.3.39"/>
    </reaction>
</comment>
<comment type="similarity">
    <text evidence="1">Belongs to the 4-hydroxy-2-oxovalerate aldolase family.</text>
</comment>
<proteinExistence type="inferred from homology"/>
<evidence type="ECO:0000255" key="1">
    <source>
        <dbReference type="HAMAP-Rule" id="MF_01656"/>
    </source>
</evidence>
<accession>A4XDT6</accession>
<gene>
    <name type="ordered locus">Saro_3852</name>
</gene>